<proteinExistence type="evidence at transcript level"/>
<sequence length="437" mass="50032">MTESIDLNRSESESDNNTDDVTPIFAIDDSSKGRVSGPTRRSTKGGWTAEEDQILTNVVKKYQGRNWKRIAECLPGSEENRRNDVQCQHRWLKVLDPSLQKGAWKKEEDELLSELVKDYMENDRPPWSKISKELPGRIGKQCRERWHNHLNPTIIKSPWTREEELILVQAQRGNGNKWAEIAKLLPGRTENNIKNHWNCSVKKRLEQFPSNLFSGVVYGSKPSSGFEYNFFNQRNTMVESCITSQIKEAAKSPQRDFLDLTLGLNWRSISSSTSSLRGEESVSSSVDSVCARLNACLETPQNSNNDTVCVKEVREMKERLRMAARTFDTPSIISKTSSPASGLKRLRQKYDTPFPTDARSHMSSEEDHSVSASPSSKYRFVKRNTCSGSKPLERRLDFDFLLWDEHGRRNGIVNFSVRILPQKSDLKSGLVRPFWLR</sequence>
<reference key="1">
    <citation type="journal article" date="1999" name="Plant Physiol.">
        <title>Newly discovered plant c-myb-like genes rewrite the evolution of the plant myb gene family.</title>
        <authorList>
            <person name="Braun E.L."/>
            <person name="Grotewold E."/>
        </authorList>
    </citation>
    <scope>NUCLEOTIDE SEQUENCE [MRNA]</scope>
    <source>
        <strain>cv. Columbia</strain>
    </source>
</reference>
<reference key="2">
    <citation type="journal article" date="2001" name="Curr. Opin. Plant Biol.">
        <title>The R2R3-MYB gene family in Arabidopsis thaliana.</title>
        <authorList>
            <person name="Stracke R."/>
            <person name="Werber M."/>
            <person name="Weisshaar B."/>
        </authorList>
    </citation>
    <scope>NUCLEOTIDE SEQUENCE [MRNA]</scope>
    <scope>GENE FAMILY</scope>
    <scope>NOMENCLATURE</scope>
    <source>
        <strain>cv. Columbia</strain>
    </source>
</reference>
<reference key="3">
    <citation type="journal article" date="1999" name="Nature">
        <title>Sequence and analysis of chromosome 4 of the plant Arabidopsis thaliana.</title>
        <authorList>
            <person name="Mayer K.F.X."/>
            <person name="Schueller C."/>
            <person name="Wambutt R."/>
            <person name="Murphy G."/>
            <person name="Volckaert G."/>
            <person name="Pohl T."/>
            <person name="Duesterhoeft A."/>
            <person name="Stiekema W."/>
            <person name="Entian K.-D."/>
            <person name="Terryn N."/>
            <person name="Harris B."/>
            <person name="Ansorge W."/>
            <person name="Brandt P."/>
            <person name="Grivell L.A."/>
            <person name="Rieger M."/>
            <person name="Weichselgartner M."/>
            <person name="de Simone V."/>
            <person name="Obermaier B."/>
            <person name="Mache R."/>
            <person name="Mueller M."/>
            <person name="Kreis M."/>
            <person name="Delseny M."/>
            <person name="Puigdomenech P."/>
            <person name="Watson M."/>
            <person name="Schmidtheini T."/>
            <person name="Reichert B."/>
            <person name="Portetelle D."/>
            <person name="Perez-Alonso M."/>
            <person name="Boutry M."/>
            <person name="Bancroft I."/>
            <person name="Vos P."/>
            <person name="Hoheisel J."/>
            <person name="Zimmermann W."/>
            <person name="Wedler H."/>
            <person name="Ridley P."/>
            <person name="Langham S.-A."/>
            <person name="McCullagh B."/>
            <person name="Bilham L."/>
            <person name="Robben J."/>
            <person name="van der Schueren J."/>
            <person name="Grymonprez B."/>
            <person name="Chuang Y.-J."/>
            <person name="Vandenbussche F."/>
            <person name="Braeken M."/>
            <person name="Weltjens I."/>
            <person name="Voet M."/>
            <person name="Bastiaens I."/>
            <person name="Aert R."/>
            <person name="Defoor E."/>
            <person name="Weitzenegger T."/>
            <person name="Bothe G."/>
            <person name="Ramsperger U."/>
            <person name="Hilbert H."/>
            <person name="Braun M."/>
            <person name="Holzer E."/>
            <person name="Brandt A."/>
            <person name="Peters S."/>
            <person name="van Staveren M."/>
            <person name="Dirkse W."/>
            <person name="Mooijman P."/>
            <person name="Klein Lankhorst R."/>
            <person name="Rose M."/>
            <person name="Hauf J."/>
            <person name="Koetter P."/>
            <person name="Berneiser S."/>
            <person name="Hempel S."/>
            <person name="Feldpausch M."/>
            <person name="Lamberth S."/>
            <person name="Van den Daele H."/>
            <person name="De Keyser A."/>
            <person name="Buysshaert C."/>
            <person name="Gielen J."/>
            <person name="Villarroel R."/>
            <person name="De Clercq R."/>
            <person name="van Montagu M."/>
            <person name="Rogers J."/>
            <person name="Cronin A."/>
            <person name="Quail M.A."/>
            <person name="Bray-Allen S."/>
            <person name="Clark L."/>
            <person name="Doggett J."/>
            <person name="Hall S."/>
            <person name="Kay M."/>
            <person name="Lennard N."/>
            <person name="McLay K."/>
            <person name="Mayes R."/>
            <person name="Pettett A."/>
            <person name="Rajandream M.A."/>
            <person name="Lyne M."/>
            <person name="Benes V."/>
            <person name="Rechmann S."/>
            <person name="Borkova D."/>
            <person name="Bloecker H."/>
            <person name="Scharfe M."/>
            <person name="Grimm M."/>
            <person name="Loehnert T.-H."/>
            <person name="Dose S."/>
            <person name="de Haan M."/>
            <person name="Maarse A.C."/>
            <person name="Schaefer M."/>
            <person name="Mueller-Auer S."/>
            <person name="Gabel C."/>
            <person name="Fuchs M."/>
            <person name="Fartmann B."/>
            <person name="Granderath K."/>
            <person name="Dauner D."/>
            <person name="Herzl A."/>
            <person name="Neumann S."/>
            <person name="Argiriou A."/>
            <person name="Vitale D."/>
            <person name="Liguori R."/>
            <person name="Piravandi E."/>
            <person name="Massenet O."/>
            <person name="Quigley F."/>
            <person name="Clabauld G."/>
            <person name="Muendlein A."/>
            <person name="Felber R."/>
            <person name="Schnabl S."/>
            <person name="Hiller R."/>
            <person name="Schmidt W."/>
            <person name="Lecharny A."/>
            <person name="Aubourg S."/>
            <person name="Chefdor F."/>
            <person name="Cooke R."/>
            <person name="Berger C."/>
            <person name="Monfort A."/>
            <person name="Casacuberta E."/>
            <person name="Gibbons T."/>
            <person name="Weber N."/>
            <person name="Vandenbol M."/>
            <person name="Bargues M."/>
            <person name="Terol J."/>
            <person name="Torres A."/>
            <person name="Perez-Perez A."/>
            <person name="Purnelle B."/>
            <person name="Bent E."/>
            <person name="Johnson S."/>
            <person name="Tacon D."/>
            <person name="Jesse T."/>
            <person name="Heijnen L."/>
            <person name="Schwarz S."/>
            <person name="Scholler P."/>
            <person name="Heber S."/>
            <person name="Francs P."/>
            <person name="Bielke C."/>
            <person name="Frishman D."/>
            <person name="Haase D."/>
            <person name="Lemcke K."/>
            <person name="Mewes H.-W."/>
            <person name="Stocker S."/>
            <person name="Zaccaria P."/>
            <person name="Bevan M."/>
            <person name="Wilson R.K."/>
            <person name="de la Bastide M."/>
            <person name="Habermann K."/>
            <person name="Parnell L."/>
            <person name="Dedhia N."/>
            <person name="Gnoj L."/>
            <person name="Schutz K."/>
            <person name="Huang E."/>
            <person name="Spiegel L."/>
            <person name="Sekhon M."/>
            <person name="Murray J."/>
            <person name="Sheet P."/>
            <person name="Cordes M."/>
            <person name="Abu-Threideh J."/>
            <person name="Stoneking T."/>
            <person name="Kalicki J."/>
            <person name="Graves T."/>
            <person name="Harmon G."/>
            <person name="Edwards J."/>
            <person name="Latreille P."/>
            <person name="Courtney L."/>
            <person name="Cloud J."/>
            <person name="Abbott A."/>
            <person name="Scott K."/>
            <person name="Johnson D."/>
            <person name="Minx P."/>
            <person name="Bentley D."/>
            <person name="Fulton B."/>
            <person name="Miller N."/>
            <person name="Greco T."/>
            <person name="Kemp K."/>
            <person name="Kramer J."/>
            <person name="Fulton L."/>
            <person name="Mardis E."/>
            <person name="Dante M."/>
            <person name="Pepin K."/>
            <person name="Hillier L.W."/>
            <person name="Nelson J."/>
            <person name="Spieth J."/>
            <person name="Ryan E."/>
            <person name="Andrews S."/>
            <person name="Geisel C."/>
            <person name="Layman D."/>
            <person name="Du H."/>
            <person name="Ali J."/>
            <person name="Berghoff A."/>
            <person name="Jones K."/>
            <person name="Drone K."/>
            <person name="Cotton M."/>
            <person name="Joshu C."/>
            <person name="Antonoiu B."/>
            <person name="Zidanic M."/>
            <person name="Strong C."/>
            <person name="Sun H."/>
            <person name="Lamar B."/>
            <person name="Yordan C."/>
            <person name="Ma P."/>
            <person name="Zhong J."/>
            <person name="Preston R."/>
            <person name="Vil D."/>
            <person name="Shekher M."/>
            <person name="Matero A."/>
            <person name="Shah R."/>
            <person name="Swaby I.K."/>
            <person name="O'Shaughnessy A."/>
            <person name="Rodriguez M."/>
            <person name="Hoffman J."/>
            <person name="Till S."/>
            <person name="Granat S."/>
            <person name="Shohdy N."/>
            <person name="Hasegawa A."/>
            <person name="Hameed A."/>
            <person name="Lodhi M."/>
            <person name="Johnson A."/>
            <person name="Chen E."/>
            <person name="Marra M.A."/>
            <person name="Martienssen R."/>
            <person name="McCombie W.R."/>
        </authorList>
    </citation>
    <scope>NUCLEOTIDE SEQUENCE [LARGE SCALE GENOMIC DNA]</scope>
    <source>
        <strain>cv. Columbia</strain>
    </source>
</reference>
<reference key="4">
    <citation type="journal article" date="2017" name="Plant J.">
        <title>Araport11: a complete reannotation of the Arabidopsis thaliana reference genome.</title>
        <authorList>
            <person name="Cheng C.Y."/>
            <person name="Krishnakumar V."/>
            <person name="Chan A.P."/>
            <person name="Thibaud-Nissen F."/>
            <person name="Schobel S."/>
            <person name="Town C.D."/>
        </authorList>
    </citation>
    <scope>GENOME REANNOTATION</scope>
    <source>
        <strain>cv. Columbia</strain>
    </source>
</reference>
<reference key="5">
    <citation type="journal article" date="2007" name="Development">
        <title>R1R2R3-Myb proteins positively regulate cytokinesis through activation of KNOLLE transcription in Arabidopsis thaliana.</title>
        <authorList>
            <person name="Haga N."/>
            <person name="Kato K."/>
            <person name="Murase M."/>
            <person name="Araki S."/>
            <person name="Kubo M."/>
            <person name="Demura T."/>
            <person name="Suzuki K."/>
            <person name="Mueller I."/>
            <person name="Voss U."/>
            <person name="Juergens G."/>
            <person name="Ito M."/>
        </authorList>
    </citation>
    <scope>GENE FAMILY</scope>
    <source>
        <strain>cv. Columbia</strain>
    </source>
</reference>
<reference key="6">
    <citation type="journal article" date="2008" name="BMC Genomics">
        <title>A systematic survey in Arabidopsis thaliana of transcription factors that modulate circadian parameters.</title>
        <authorList>
            <person name="Hanano S."/>
            <person name="Stracke R."/>
            <person name="Jakoby M."/>
            <person name="Merkle T."/>
            <person name="Domagalska M.A."/>
            <person name="Weisshaar B."/>
            <person name="Davis S.J."/>
        </authorList>
    </citation>
    <scope>FUNCTION</scope>
    <scope>DISRUPTION PHENOTYPE</scope>
</reference>
<name>MB3R2_ARATH</name>
<keyword id="KW-0025">Alternative splicing</keyword>
<keyword id="KW-0238">DNA-binding</keyword>
<keyword id="KW-0539">Nucleus</keyword>
<keyword id="KW-1185">Reference proteome</keyword>
<keyword id="KW-0677">Repeat</keyword>
<keyword id="KW-0804">Transcription</keyword>
<keyword id="KW-0805">Transcription regulation</keyword>
<evidence type="ECO:0000250" key="1">
    <source>
        <dbReference type="UniProtKB" id="Q8H1P9"/>
    </source>
</evidence>
<evidence type="ECO:0000250" key="2">
    <source>
        <dbReference type="UniProtKB" id="Q94FL9"/>
    </source>
</evidence>
<evidence type="ECO:0000255" key="3">
    <source>
        <dbReference type="PROSITE-ProRule" id="PRU00625"/>
    </source>
</evidence>
<evidence type="ECO:0000256" key="4">
    <source>
        <dbReference type="SAM" id="MobiDB-lite"/>
    </source>
</evidence>
<evidence type="ECO:0000269" key="5">
    <source>
    </source>
</evidence>
<evidence type="ECO:0000303" key="6">
    <source>
    </source>
</evidence>
<evidence type="ECO:0000303" key="7">
    <source>
    </source>
</evidence>
<evidence type="ECO:0000305" key="8"/>
<evidence type="ECO:0000312" key="9">
    <source>
        <dbReference type="Araport" id="AT4G00540"/>
    </source>
</evidence>
<evidence type="ECO:0000312" key="10">
    <source>
        <dbReference type="EMBL" id="AAC13637.1"/>
    </source>
</evidence>
<protein>
    <recommendedName>
        <fullName evidence="7">Transcription factor MYB3R-2</fullName>
    </recommendedName>
    <alternativeName>
        <fullName evidence="7">Myb-related protein 3R-2</fullName>
    </alternativeName>
    <alternativeName>
        <fullName evidence="6">Plant c-MYB-like protein 2</fullName>
        <shortName evidence="6">Protein PC-MYB2</shortName>
    </alternativeName>
</protein>
<dbReference type="EMBL" id="AF151647">
    <property type="protein sequence ID" value="AAD46773.1"/>
    <property type="molecule type" value="mRNA"/>
</dbReference>
<dbReference type="EMBL" id="AF218054">
    <property type="protein sequence ID" value="AAF26415.1"/>
    <property type="molecule type" value="mRNA"/>
</dbReference>
<dbReference type="EMBL" id="AF058919">
    <property type="protein sequence ID" value="AAC13637.1"/>
    <property type="status" value="ALT_SEQ"/>
    <property type="molecule type" value="Genomic_DNA"/>
</dbReference>
<dbReference type="EMBL" id="AL161472">
    <property type="protein sequence ID" value="CAB80863.1"/>
    <property type="status" value="ALT_SEQ"/>
    <property type="molecule type" value="Genomic_DNA"/>
</dbReference>
<dbReference type="EMBL" id="CP002687">
    <property type="protein sequence ID" value="AEE81896.1"/>
    <property type="molecule type" value="Genomic_DNA"/>
</dbReference>
<dbReference type="PIR" id="T01218">
    <property type="entry name" value="T01218"/>
</dbReference>
<dbReference type="RefSeq" id="NP_567179.1">
    <molecule id="Q9SPN3-1"/>
    <property type="nucleotide sequence ID" value="NM_116278.1"/>
</dbReference>
<dbReference type="SMR" id="Q9SPN3"/>
<dbReference type="STRING" id="3702.Q9SPN3"/>
<dbReference type="GlyGen" id="Q9SPN3">
    <property type="glycosylation" value="1 site"/>
</dbReference>
<dbReference type="iPTMnet" id="Q9SPN3"/>
<dbReference type="PaxDb" id="3702-AT4G00540.1"/>
<dbReference type="EnsemblPlants" id="AT4G00540.1">
    <molecule id="Q9SPN3-1"/>
    <property type="protein sequence ID" value="AT4G00540.1"/>
    <property type="gene ID" value="AT4G00540"/>
</dbReference>
<dbReference type="GeneID" id="827977"/>
<dbReference type="Gramene" id="AT4G00540.1">
    <molecule id="Q9SPN3-1"/>
    <property type="protein sequence ID" value="AT4G00540.1"/>
    <property type="gene ID" value="AT4G00540"/>
</dbReference>
<dbReference type="KEGG" id="ath:AT4G00540"/>
<dbReference type="Araport" id="AT4G00540"/>
<dbReference type="TAIR" id="AT4G00540">
    <property type="gene designation" value="MYB3R2"/>
</dbReference>
<dbReference type="eggNOG" id="KOG0048">
    <property type="taxonomic scope" value="Eukaryota"/>
</dbReference>
<dbReference type="InParanoid" id="Q9SPN3"/>
<dbReference type="OMA" id="ENDSPFH"/>
<dbReference type="PhylomeDB" id="Q9SPN3"/>
<dbReference type="PRO" id="PR:Q9SPN3"/>
<dbReference type="Proteomes" id="UP000006548">
    <property type="component" value="Chromosome 4"/>
</dbReference>
<dbReference type="ExpressionAtlas" id="Q9SPN3">
    <property type="expression patterns" value="baseline and differential"/>
</dbReference>
<dbReference type="GO" id="GO:0005634">
    <property type="term" value="C:nucleus"/>
    <property type="evidence" value="ECO:0007669"/>
    <property type="project" value="UniProtKB-SubCell"/>
</dbReference>
<dbReference type="GO" id="GO:0003700">
    <property type="term" value="F:DNA-binding transcription factor activity"/>
    <property type="evidence" value="ECO:0000250"/>
    <property type="project" value="TAIR"/>
</dbReference>
<dbReference type="GO" id="GO:0043565">
    <property type="term" value="F:sequence-specific DNA binding"/>
    <property type="evidence" value="ECO:0000250"/>
    <property type="project" value="UniProtKB"/>
</dbReference>
<dbReference type="GO" id="GO:0042752">
    <property type="term" value="P:regulation of circadian rhythm"/>
    <property type="evidence" value="ECO:0000315"/>
    <property type="project" value="UniProtKB"/>
</dbReference>
<dbReference type="CDD" id="cd00167">
    <property type="entry name" value="SANT"/>
    <property type="match status" value="3"/>
</dbReference>
<dbReference type="FunFam" id="1.10.10.60:FF:000010">
    <property type="entry name" value="Transcriptional activator Myb isoform A"/>
    <property type="match status" value="1"/>
</dbReference>
<dbReference type="FunFam" id="1.10.10.60:FF:000016">
    <property type="entry name" value="Transcriptional activator Myb isoform A"/>
    <property type="match status" value="1"/>
</dbReference>
<dbReference type="Gene3D" id="1.10.10.60">
    <property type="entry name" value="Homeodomain-like"/>
    <property type="match status" value="3"/>
</dbReference>
<dbReference type="InterPro" id="IPR009057">
    <property type="entry name" value="Homeodomain-like_sf"/>
</dbReference>
<dbReference type="InterPro" id="IPR017930">
    <property type="entry name" value="Myb_dom"/>
</dbReference>
<dbReference type="InterPro" id="IPR050560">
    <property type="entry name" value="MYB_TF"/>
</dbReference>
<dbReference type="InterPro" id="IPR001005">
    <property type="entry name" value="SANT/Myb"/>
</dbReference>
<dbReference type="PANTHER" id="PTHR45614">
    <property type="entry name" value="MYB PROTEIN-RELATED"/>
    <property type="match status" value="1"/>
</dbReference>
<dbReference type="Pfam" id="PF13921">
    <property type="entry name" value="Myb_DNA-bind_6"/>
    <property type="match status" value="1"/>
</dbReference>
<dbReference type="Pfam" id="PF00249">
    <property type="entry name" value="Myb_DNA-binding"/>
    <property type="match status" value="1"/>
</dbReference>
<dbReference type="SMART" id="SM00717">
    <property type="entry name" value="SANT"/>
    <property type="match status" value="3"/>
</dbReference>
<dbReference type="SUPFAM" id="SSF46689">
    <property type="entry name" value="Homeodomain-like"/>
    <property type="match status" value="2"/>
</dbReference>
<dbReference type="PROSITE" id="PS51294">
    <property type="entry name" value="HTH_MYB"/>
    <property type="match status" value="3"/>
</dbReference>
<accession>Q9SPN3</accession>
<accession>O65263</accession>
<gene>
    <name evidence="7" type="primary">MYB3R2</name>
    <name evidence="6" type="synonym">PC-MYB2</name>
    <name evidence="9" type="ordered locus">At4g00540</name>
    <name evidence="10" type="ORF">F6N23.19</name>
</gene>
<comment type="function">
    <text evidence="2 5">Transcription factor that binds 5'-AACGG-3' motifs in gene promoters (By similarity). Required for proper circadian rhythm (PubMed:18426557).</text>
</comment>
<comment type="subunit">
    <text evidence="1">Component of a DREAM-like complex which modulates a variety of developmentally regulated genes and of the mitotic genes in proliferating and differentiated cells.</text>
</comment>
<comment type="subcellular location">
    <subcellularLocation>
        <location evidence="3">Nucleus</location>
    </subcellularLocation>
</comment>
<comment type="alternative products">
    <event type="alternative splicing"/>
    <isoform>
        <id>Q9SPN3-1</id>
        <name>1</name>
        <sequence type="displayed"/>
    </isoform>
    <text evidence="8">Additional isoforms seem to exist.</text>
</comment>
<comment type="disruption phenotype">
    <text evidence="5">Aberrant circadian rhythms.</text>
</comment>
<comment type="sequence caution" evidence="8">
    <conflict type="erroneous gene model prediction">
        <sequence resource="EMBL-CDS" id="AAC13637"/>
    </conflict>
</comment>
<comment type="sequence caution" evidence="8">
    <conflict type="erroneous gene model prediction">
        <sequence resource="EMBL-CDS" id="CAB80863"/>
    </conflict>
</comment>
<feature type="chain" id="PRO_0000438892" description="Transcription factor MYB3R-2">
    <location>
        <begin position="1"/>
        <end position="437"/>
    </location>
</feature>
<feature type="domain" description="HTH myb-type 1" evidence="3">
    <location>
        <begin position="39"/>
        <end position="95"/>
    </location>
</feature>
<feature type="domain" description="HTH myb-type 2" evidence="3">
    <location>
        <begin position="96"/>
        <end position="154"/>
    </location>
</feature>
<feature type="domain" description="HTH myb-type 3" evidence="3">
    <location>
        <begin position="155"/>
        <end position="205"/>
    </location>
</feature>
<feature type="DNA-binding region" description="H-T-H motif" evidence="3">
    <location>
        <begin position="67"/>
        <end position="95"/>
    </location>
</feature>
<feature type="DNA-binding region" description="H-T-H motif" evidence="3">
    <location>
        <begin position="127"/>
        <end position="150"/>
    </location>
</feature>
<feature type="DNA-binding region" description="H-T-H motif" evidence="3">
    <location>
        <begin position="178"/>
        <end position="201"/>
    </location>
</feature>
<feature type="region of interest" description="Disordered" evidence="4">
    <location>
        <begin position="1"/>
        <end position="46"/>
    </location>
</feature>
<feature type="region of interest" description="Disordered" evidence="4">
    <location>
        <begin position="352"/>
        <end position="374"/>
    </location>
</feature>
<feature type="compositionally biased region" description="Basic and acidic residues" evidence="4">
    <location>
        <begin position="1"/>
        <end position="12"/>
    </location>
</feature>
<feature type="compositionally biased region" description="Basic and acidic residues" evidence="4">
    <location>
        <begin position="358"/>
        <end position="369"/>
    </location>
</feature>
<organism>
    <name type="scientific">Arabidopsis thaliana</name>
    <name type="common">Mouse-ear cress</name>
    <dbReference type="NCBI Taxonomy" id="3702"/>
    <lineage>
        <taxon>Eukaryota</taxon>
        <taxon>Viridiplantae</taxon>
        <taxon>Streptophyta</taxon>
        <taxon>Embryophyta</taxon>
        <taxon>Tracheophyta</taxon>
        <taxon>Spermatophyta</taxon>
        <taxon>Magnoliopsida</taxon>
        <taxon>eudicotyledons</taxon>
        <taxon>Gunneridae</taxon>
        <taxon>Pentapetalae</taxon>
        <taxon>rosids</taxon>
        <taxon>malvids</taxon>
        <taxon>Brassicales</taxon>
        <taxon>Brassicaceae</taxon>
        <taxon>Camelineae</taxon>
        <taxon>Arabidopsis</taxon>
    </lineage>
</organism>